<dbReference type="EMBL" id="X04383">
    <property type="protein sequence ID" value="CAA27970.1"/>
    <property type="molecule type" value="Genomic_DNA"/>
</dbReference>
<dbReference type="EMBL" id="AJ585583">
    <property type="protein sequence ID" value="CAE52103.1"/>
    <property type="molecule type" value="Genomic_DNA"/>
</dbReference>
<dbReference type="EMBL" id="AJ585584">
    <property type="protein sequence ID" value="CAE52104.1"/>
    <property type="molecule type" value="Genomic_DNA"/>
</dbReference>
<dbReference type="EMBL" id="AJ585585">
    <property type="protein sequence ID" value="CAE52105.1"/>
    <property type="molecule type" value="Genomic_DNA"/>
</dbReference>
<dbReference type="EMBL" id="AJ585586">
    <property type="protein sequence ID" value="CAE52106.1"/>
    <property type="molecule type" value="Genomic_DNA"/>
</dbReference>
<dbReference type="EMBL" id="AJ585587">
    <property type="protein sequence ID" value="CAE52107.1"/>
    <property type="molecule type" value="Genomic_DNA"/>
</dbReference>
<dbReference type="EMBL" id="AJ585588">
    <property type="protein sequence ID" value="CAE52108.1"/>
    <property type="molecule type" value="Genomic_DNA"/>
</dbReference>
<dbReference type="EMBL" id="AJ585589">
    <property type="protein sequence ID" value="CAE52109.1"/>
    <property type="molecule type" value="Genomic_DNA"/>
</dbReference>
<dbReference type="EMBL" id="AJ585590">
    <property type="protein sequence ID" value="CAE52110.1"/>
    <property type="molecule type" value="Genomic_DNA"/>
</dbReference>
<dbReference type="EMBL" id="AJ585591">
    <property type="protein sequence ID" value="CAE52111.1"/>
    <property type="molecule type" value="Genomic_DNA"/>
</dbReference>
<dbReference type="EMBL" id="AJ585592">
    <property type="protein sequence ID" value="CAE52112.1"/>
    <property type="molecule type" value="Genomic_DNA"/>
</dbReference>
<dbReference type="EMBL" id="AJ585593">
    <property type="protein sequence ID" value="CAE52113.1"/>
    <property type="molecule type" value="Genomic_DNA"/>
</dbReference>
<dbReference type="EMBL" id="AJ585594">
    <property type="protein sequence ID" value="CAE52114.1"/>
    <property type="molecule type" value="Genomic_DNA"/>
</dbReference>
<dbReference type="EMBL" id="AJ585595">
    <property type="protein sequence ID" value="CAE52115.1"/>
    <property type="molecule type" value="Genomic_DNA"/>
</dbReference>
<dbReference type="EMBL" id="AJ585596">
    <property type="protein sequence ID" value="CAE52116.1"/>
    <property type="molecule type" value="Genomic_DNA"/>
</dbReference>
<dbReference type="EMBL" id="AJ585597">
    <property type="protein sequence ID" value="CAE52117.1"/>
    <property type="molecule type" value="Genomic_DNA"/>
</dbReference>
<dbReference type="EMBL" id="AJ585598">
    <property type="protein sequence ID" value="CAE52118.1"/>
    <property type="molecule type" value="Genomic_DNA"/>
</dbReference>
<dbReference type="EMBL" id="AJ585599">
    <property type="protein sequence ID" value="CAE52119.1"/>
    <property type="molecule type" value="Genomic_DNA"/>
</dbReference>
<dbReference type="EMBL" id="U32274">
    <property type="protein sequence ID" value="AAB64834.1"/>
    <property type="molecule type" value="Genomic_DNA"/>
</dbReference>
<dbReference type="EMBL" id="BK006938">
    <property type="protein sequence ID" value="DAA12236.1"/>
    <property type="molecule type" value="Genomic_DNA"/>
</dbReference>
<dbReference type="PIR" id="A24330">
    <property type="entry name" value="A24330"/>
</dbReference>
<dbReference type="RefSeq" id="NP_010680.1">
    <property type="nucleotide sequence ID" value="NM_001180700.1"/>
</dbReference>
<dbReference type="PDB" id="6T9I">
    <property type="method" value="EM"/>
    <property type="resolution" value="3.90 A"/>
    <property type="chains" value="C=1-337"/>
</dbReference>
<dbReference type="PDB" id="6T9K">
    <property type="method" value="EM"/>
    <property type="resolution" value="3.30 A"/>
    <property type="chains" value="C=1-337"/>
</dbReference>
<dbReference type="PDBsum" id="6T9I"/>
<dbReference type="PDBsum" id="6T9K"/>
<dbReference type="EMDB" id="EMD-10412"/>
<dbReference type="EMDB" id="EMD-10414"/>
<dbReference type="SMR" id="P06844"/>
<dbReference type="BioGRID" id="32454">
    <property type="interactions" value="519"/>
</dbReference>
<dbReference type="ComplexPortal" id="CPX-656">
    <property type="entry name" value="SAGA complex"/>
</dbReference>
<dbReference type="ComplexPortal" id="CPX-675">
    <property type="entry name" value="SLIK (SAGA-like) complex"/>
</dbReference>
<dbReference type="DIP" id="DIP-2204N"/>
<dbReference type="FunCoup" id="P06844">
    <property type="interactions" value="1604"/>
</dbReference>
<dbReference type="IntAct" id="P06844">
    <property type="interactions" value="30"/>
</dbReference>
<dbReference type="MINT" id="P06844"/>
<dbReference type="STRING" id="4932.YDR392W"/>
<dbReference type="iPTMnet" id="P06844"/>
<dbReference type="PaxDb" id="4932-YDR392W"/>
<dbReference type="PeptideAtlas" id="P06844"/>
<dbReference type="EnsemblFungi" id="YDR392W_mRNA">
    <property type="protein sequence ID" value="YDR392W"/>
    <property type="gene ID" value="YDR392W"/>
</dbReference>
<dbReference type="GeneID" id="852001"/>
<dbReference type="KEGG" id="sce:YDR392W"/>
<dbReference type="AGR" id="SGD:S000002800"/>
<dbReference type="SGD" id="S000002800">
    <property type="gene designation" value="SPT3"/>
</dbReference>
<dbReference type="VEuPathDB" id="FungiDB:YDR392W"/>
<dbReference type="eggNOG" id="KOG3902">
    <property type="taxonomic scope" value="Eukaryota"/>
</dbReference>
<dbReference type="GeneTree" id="ENSGT00390000010738"/>
<dbReference type="HOGENOM" id="CLU_038706_1_1_1"/>
<dbReference type="InParanoid" id="P06844"/>
<dbReference type="OMA" id="QFMFNEQ"/>
<dbReference type="OrthoDB" id="66982at2759"/>
<dbReference type="BioCyc" id="YEAST:G3O-29940-MONOMER"/>
<dbReference type="Reactome" id="R-SCE-674695">
    <property type="pathway name" value="RNA Polymerase II Pre-transcription Events"/>
</dbReference>
<dbReference type="Reactome" id="R-SCE-6807505">
    <property type="pathway name" value="RNA polymerase II transcribes snRNA genes"/>
</dbReference>
<dbReference type="Reactome" id="R-SCE-73776">
    <property type="pathway name" value="RNA Polymerase II Promoter Escape"/>
</dbReference>
<dbReference type="Reactome" id="R-SCE-73779">
    <property type="pathway name" value="RNA Polymerase II Transcription Pre-Initiation And Promoter Opening"/>
</dbReference>
<dbReference type="Reactome" id="R-SCE-75953">
    <property type="pathway name" value="RNA Polymerase II Transcription Initiation"/>
</dbReference>
<dbReference type="Reactome" id="R-SCE-76042">
    <property type="pathway name" value="RNA Polymerase II Transcription Initiation And Promoter Clearance"/>
</dbReference>
<dbReference type="BioGRID-ORCS" id="852001">
    <property type="hits" value="3 hits in 10 CRISPR screens"/>
</dbReference>
<dbReference type="PRO" id="PR:P06844"/>
<dbReference type="Proteomes" id="UP000002311">
    <property type="component" value="Chromosome IV"/>
</dbReference>
<dbReference type="RNAct" id="P06844">
    <property type="molecule type" value="protein"/>
</dbReference>
<dbReference type="GO" id="GO:0005829">
    <property type="term" value="C:cytosol"/>
    <property type="evidence" value="ECO:0000314"/>
    <property type="project" value="SGD"/>
</dbReference>
<dbReference type="GO" id="GO:0005634">
    <property type="term" value="C:nucleus"/>
    <property type="evidence" value="ECO:0000314"/>
    <property type="project" value="SGD"/>
</dbReference>
<dbReference type="GO" id="GO:0000124">
    <property type="term" value="C:SAGA complex"/>
    <property type="evidence" value="ECO:0000314"/>
    <property type="project" value="SGD"/>
</dbReference>
<dbReference type="GO" id="GO:0046695">
    <property type="term" value="C:SLIK (SAGA-like) complex"/>
    <property type="evidence" value="ECO:0000314"/>
    <property type="project" value="SGD"/>
</dbReference>
<dbReference type="GO" id="GO:0046982">
    <property type="term" value="F:protein heterodimerization activity"/>
    <property type="evidence" value="ECO:0007669"/>
    <property type="project" value="InterPro"/>
</dbReference>
<dbReference type="GO" id="GO:0003712">
    <property type="term" value="F:transcription coregulator activity"/>
    <property type="evidence" value="ECO:0000314"/>
    <property type="project" value="SGD"/>
</dbReference>
<dbReference type="GO" id="GO:0006325">
    <property type="term" value="P:chromatin organization"/>
    <property type="evidence" value="ECO:0000314"/>
    <property type="project" value="SGD"/>
</dbReference>
<dbReference type="GO" id="GO:0001403">
    <property type="term" value="P:invasive growth in response to glucose limitation"/>
    <property type="evidence" value="ECO:0000314"/>
    <property type="project" value="SGD"/>
</dbReference>
<dbReference type="GO" id="GO:0007124">
    <property type="term" value="P:pseudohyphal growth"/>
    <property type="evidence" value="ECO:0000314"/>
    <property type="project" value="SGD"/>
</dbReference>
<dbReference type="GO" id="GO:0006357">
    <property type="term" value="P:regulation of transcription by RNA polymerase II"/>
    <property type="evidence" value="ECO:0000314"/>
    <property type="project" value="ComplexPortal"/>
</dbReference>
<dbReference type="GO" id="GO:0006366">
    <property type="term" value="P:transcription by RNA polymerase II"/>
    <property type="evidence" value="ECO:0000315"/>
    <property type="project" value="SGD"/>
</dbReference>
<dbReference type="CDD" id="cd22926">
    <property type="entry name" value="HFD_SPT3"/>
    <property type="match status" value="1"/>
</dbReference>
<dbReference type="FunFam" id="1.10.20.10:FF:000023">
    <property type="entry name" value="transcription initiation protein SPT3 homolog"/>
    <property type="match status" value="1"/>
</dbReference>
<dbReference type="Gene3D" id="1.10.20.10">
    <property type="entry name" value="Histone, subunit A"/>
    <property type="match status" value="1"/>
</dbReference>
<dbReference type="InterPro" id="IPR009072">
    <property type="entry name" value="Histone-fold"/>
</dbReference>
<dbReference type="InterPro" id="IPR003195">
    <property type="entry name" value="TFIID_TAF13"/>
</dbReference>
<dbReference type="PANTHER" id="PTHR11380">
    <property type="entry name" value="TRANSCRIPTION INITIATION FACTOR TFIID/SUPT3-RELATED"/>
    <property type="match status" value="1"/>
</dbReference>
<dbReference type="PANTHER" id="PTHR11380:SF16">
    <property type="entry name" value="TRANSCRIPTION INITIATION PROTEIN SPT3 HOMOLOG"/>
    <property type="match status" value="1"/>
</dbReference>
<dbReference type="Pfam" id="PF02269">
    <property type="entry name" value="TFIID-18kDa"/>
    <property type="match status" value="1"/>
</dbReference>
<dbReference type="SUPFAM" id="SSF47113">
    <property type="entry name" value="Histone-fold"/>
    <property type="match status" value="1"/>
</dbReference>
<protein>
    <recommendedName>
        <fullName>SAGA complex subunit SPT3</fullName>
    </recommendedName>
    <alternativeName>
        <fullName>Positive regulator of Ty transcription</fullName>
    </alternativeName>
    <alternativeName>
        <fullName>Suppressor of Ty protein 3</fullName>
    </alternativeName>
</protein>
<keyword id="KW-0002">3D-structure</keyword>
<keyword id="KW-0010">Activator</keyword>
<keyword id="KW-0963">Cytoplasm</keyword>
<keyword id="KW-0539">Nucleus</keyword>
<keyword id="KW-0597">Phosphoprotein</keyword>
<keyword id="KW-1185">Reference proteome</keyword>
<keyword id="KW-0804">Transcription</keyword>
<keyword id="KW-0805">Transcription regulation</keyword>
<gene>
    <name type="primary">SPT3</name>
    <name type="ordered locus">YDR392W</name>
    <name type="ORF">D9509.12</name>
</gene>
<reference key="1">
    <citation type="journal article" date="1986" name="Nucleic Acids Res.">
        <title>Analysis of the yeast SPT3 gene and identification of its product, a positive regulator of Ty transcription.</title>
        <authorList>
            <person name="Winston F."/>
            <person name="Minehart P.L."/>
        </authorList>
    </citation>
    <scope>NUCLEOTIDE SEQUENCE [GENOMIC DNA]</scope>
</reference>
<reference key="2">
    <citation type="journal article" date="2004" name="Nucleic Acids Res.">
        <title>Differential evolution of the Saccharomyces cerevisiae DUP240 paralogs and implication of recombination in phylogeny.</title>
        <authorList>
            <person name="Leh-Louis V."/>
            <person name="Wirth B."/>
            <person name="Despons L."/>
            <person name="Wain-Hobson S."/>
            <person name="Potier S."/>
            <person name="Souciet J.-L."/>
        </authorList>
    </citation>
    <scope>NUCLEOTIDE SEQUENCE [GENOMIC DNA]</scope>
    <scope>VARIANTS LYS-76; ASN-93; SER-120; ILE-134 AND LYS-318</scope>
    <source>
        <strain>CLIB 219</strain>
        <strain>CLIB 382</strain>
        <strain>CLIB 388</strain>
        <strain>CLIB 410</strain>
        <strain>CLIB 413</strain>
        <strain>CLIB 556</strain>
        <strain>CLIB 630</strain>
        <strain>CLIB 95</strain>
        <strain>K1</strain>
        <strain>R12</strain>
        <strain>R13</strain>
        <strain>Sigma 1278B</strain>
        <strain>YIIc12</strain>
        <strain>YIIc17</strain>
    </source>
</reference>
<reference key="3">
    <citation type="journal article" date="1997" name="Nature">
        <title>The nucleotide sequence of Saccharomyces cerevisiae chromosome IV.</title>
        <authorList>
            <person name="Jacq C."/>
            <person name="Alt-Moerbe J."/>
            <person name="Andre B."/>
            <person name="Arnold W."/>
            <person name="Bahr A."/>
            <person name="Ballesta J.P.G."/>
            <person name="Bargues M."/>
            <person name="Baron L."/>
            <person name="Becker A."/>
            <person name="Biteau N."/>
            <person name="Bloecker H."/>
            <person name="Blugeon C."/>
            <person name="Boskovic J."/>
            <person name="Brandt P."/>
            <person name="Brueckner M."/>
            <person name="Buitrago M.J."/>
            <person name="Coster F."/>
            <person name="Delaveau T."/>
            <person name="del Rey F."/>
            <person name="Dujon B."/>
            <person name="Eide L.G."/>
            <person name="Garcia-Cantalejo J.M."/>
            <person name="Goffeau A."/>
            <person name="Gomez-Peris A."/>
            <person name="Granotier C."/>
            <person name="Hanemann V."/>
            <person name="Hankeln T."/>
            <person name="Hoheisel J.D."/>
            <person name="Jaeger W."/>
            <person name="Jimenez A."/>
            <person name="Jonniaux J.-L."/>
            <person name="Kraemer C."/>
            <person name="Kuester H."/>
            <person name="Laamanen P."/>
            <person name="Legros Y."/>
            <person name="Louis E.J."/>
            <person name="Moeller-Rieker S."/>
            <person name="Monnet A."/>
            <person name="Moro M."/>
            <person name="Mueller-Auer S."/>
            <person name="Nussbaumer B."/>
            <person name="Paricio N."/>
            <person name="Paulin L."/>
            <person name="Perea J."/>
            <person name="Perez-Alonso M."/>
            <person name="Perez-Ortin J.E."/>
            <person name="Pohl T.M."/>
            <person name="Prydz H."/>
            <person name="Purnelle B."/>
            <person name="Rasmussen S.W."/>
            <person name="Remacha M.A."/>
            <person name="Revuelta J.L."/>
            <person name="Rieger M."/>
            <person name="Salom D."/>
            <person name="Saluz H.P."/>
            <person name="Saiz J.E."/>
            <person name="Saren A.-M."/>
            <person name="Schaefer M."/>
            <person name="Scharfe M."/>
            <person name="Schmidt E.R."/>
            <person name="Schneider C."/>
            <person name="Scholler P."/>
            <person name="Schwarz S."/>
            <person name="Soler-Mira A."/>
            <person name="Urrestarazu L.A."/>
            <person name="Verhasselt P."/>
            <person name="Vissers S."/>
            <person name="Voet M."/>
            <person name="Volckaert G."/>
            <person name="Wagner G."/>
            <person name="Wambutt R."/>
            <person name="Wedler E."/>
            <person name="Wedler H."/>
            <person name="Woelfl S."/>
            <person name="Harris D.E."/>
            <person name="Bowman S."/>
            <person name="Brown D."/>
            <person name="Churcher C.M."/>
            <person name="Connor R."/>
            <person name="Dedman K."/>
            <person name="Gentles S."/>
            <person name="Hamlin N."/>
            <person name="Hunt S."/>
            <person name="Jones L."/>
            <person name="McDonald S."/>
            <person name="Murphy L.D."/>
            <person name="Niblett D."/>
            <person name="Odell C."/>
            <person name="Oliver K."/>
            <person name="Rajandream M.A."/>
            <person name="Richards C."/>
            <person name="Shore L."/>
            <person name="Walsh S.V."/>
            <person name="Barrell B.G."/>
            <person name="Dietrich F.S."/>
            <person name="Mulligan J.T."/>
            <person name="Allen E."/>
            <person name="Araujo R."/>
            <person name="Aviles E."/>
            <person name="Berno A."/>
            <person name="Carpenter J."/>
            <person name="Chen E."/>
            <person name="Cherry J.M."/>
            <person name="Chung E."/>
            <person name="Duncan M."/>
            <person name="Hunicke-Smith S."/>
            <person name="Hyman R.W."/>
            <person name="Komp C."/>
            <person name="Lashkari D."/>
            <person name="Lew H."/>
            <person name="Lin D."/>
            <person name="Mosedale D."/>
            <person name="Nakahara K."/>
            <person name="Namath A."/>
            <person name="Oefner P."/>
            <person name="Oh C."/>
            <person name="Petel F.X."/>
            <person name="Roberts D."/>
            <person name="Schramm S."/>
            <person name="Schroeder M."/>
            <person name="Shogren T."/>
            <person name="Shroff N."/>
            <person name="Winant A."/>
            <person name="Yelton M.A."/>
            <person name="Botstein D."/>
            <person name="Davis R.W."/>
            <person name="Johnston M."/>
            <person name="Andrews S."/>
            <person name="Brinkman R."/>
            <person name="Cooper J."/>
            <person name="Ding H."/>
            <person name="Du Z."/>
            <person name="Favello A."/>
            <person name="Fulton L."/>
            <person name="Gattung S."/>
            <person name="Greco T."/>
            <person name="Hallsworth K."/>
            <person name="Hawkins J."/>
            <person name="Hillier L.W."/>
            <person name="Jier M."/>
            <person name="Johnson D."/>
            <person name="Johnston L."/>
            <person name="Kirsten J."/>
            <person name="Kucaba T."/>
            <person name="Langston Y."/>
            <person name="Latreille P."/>
            <person name="Le T."/>
            <person name="Mardis E."/>
            <person name="Menezes S."/>
            <person name="Miller N."/>
            <person name="Nhan M."/>
            <person name="Pauley A."/>
            <person name="Peluso D."/>
            <person name="Rifkin L."/>
            <person name="Riles L."/>
            <person name="Taich A."/>
            <person name="Trevaskis E."/>
            <person name="Vignati D."/>
            <person name="Wilcox L."/>
            <person name="Wohldman P."/>
            <person name="Vaudin M."/>
            <person name="Wilson R."/>
            <person name="Waterston R."/>
            <person name="Albermann K."/>
            <person name="Hani J."/>
            <person name="Heumann K."/>
            <person name="Kleine K."/>
            <person name="Mewes H.-W."/>
            <person name="Zollner A."/>
            <person name="Zaccaria P."/>
        </authorList>
    </citation>
    <scope>NUCLEOTIDE SEQUENCE [LARGE SCALE GENOMIC DNA]</scope>
    <source>
        <strain>ATCC 204508 / S288c</strain>
    </source>
</reference>
<reference key="4">
    <citation type="journal article" date="2014" name="G3 (Bethesda)">
        <title>The reference genome sequence of Saccharomyces cerevisiae: Then and now.</title>
        <authorList>
            <person name="Engel S.R."/>
            <person name="Dietrich F.S."/>
            <person name="Fisk D.G."/>
            <person name="Binkley G."/>
            <person name="Balakrishnan R."/>
            <person name="Costanzo M.C."/>
            <person name="Dwight S.S."/>
            <person name="Hitz B.C."/>
            <person name="Karra K."/>
            <person name="Nash R.S."/>
            <person name="Weng S."/>
            <person name="Wong E.D."/>
            <person name="Lloyd P."/>
            <person name="Skrzypek M.S."/>
            <person name="Miyasato S.R."/>
            <person name="Simison M."/>
            <person name="Cherry J.M."/>
        </authorList>
    </citation>
    <scope>GENOME REANNOTATION</scope>
    <source>
        <strain>ATCC 204508 / S288c</strain>
    </source>
</reference>
<reference key="5">
    <citation type="journal article" date="1998" name="Cell">
        <title>A subset of TAF(II)s are integral components of the SAGA complex required for nucleosome acetylation and transcriptional stimulation.</title>
        <authorList>
            <person name="Grant P.A."/>
            <person name="Schieltz D."/>
            <person name="Pray-Grant M.G."/>
            <person name="Steger D.J."/>
            <person name="Reese J.C."/>
            <person name="Yates J.R. III"/>
            <person name="Workman J.L."/>
        </authorList>
    </citation>
    <scope>IDENTIFICATION IN THE SAGA COMPLEX</scope>
    <scope>IDENTIFICATION BY MASS SPECTROMETRY</scope>
</reference>
<reference key="6">
    <citation type="journal article" date="1997" name="Genes Dev.">
        <title>Yeast Gcn5 functions in two multisubunit complexes to acetylate nucleosomal histones: characterization of an Ada complex and the SAGA (Spt/Ada) complex.</title>
        <authorList>
            <person name="Grant P.A."/>
            <person name="Duggan L."/>
            <person name="Cote J."/>
            <person name="Roberts S.M."/>
            <person name="Brownell J.E."/>
            <person name="Candau R."/>
            <person name="Ohba R."/>
            <person name="Owen-Hughes T."/>
            <person name="Allis C.D."/>
            <person name="Winston F."/>
            <person name="Berger S.L."/>
            <person name="Workman J.L."/>
        </authorList>
    </citation>
    <scope>IDENTIFICATION IN THE SAGA COMPLEX</scope>
</reference>
<reference key="7">
    <citation type="journal article" date="1999" name="Genes Dev.">
        <title>The Spt components of SAGA facilitate TBP binding to a promoter at a post-activator-binding step in vivo.</title>
        <authorList>
            <person name="Dudley A.M."/>
            <person name="Rougeulle C."/>
            <person name="Winston F."/>
        </authorList>
    </citation>
    <scope>FUNCTION IN SAGA TRANSCRIPTIONAL ACTIVATION</scope>
</reference>
<reference key="8">
    <citation type="journal article" date="1999" name="J. Biol. Chem.">
        <title>Expanded lysine acetylation specificity of Gcn5 in native complexes.</title>
        <authorList>
            <person name="Grant P.A."/>
            <person name="Eberharter A."/>
            <person name="John S."/>
            <person name="Cook R.G."/>
            <person name="Turner B.M."/>
            <person name="Workman J.L."/>
        </authorList>
    </citation>
    <scope>FUNCTION IN HISTONE ACETYLATION AT THE SAGA COMPLEX</scope>
</reference>
<reference key="9">
    <citation type="journal article" date="2000" name="Mol. Cell. Biol.">
        <title>Inhibition of TATA-binding protein function by SAGA subunits Spt3 and Spt8 at Gcn4-activated promoters.</title>
        <authorList>
            <person name="Belotserkovskaya R."/>
            <person name="Sterner D.E."/>
            <person name="Deng M."/>
            <person name="Sayre M.H."/>
            <person name="Lieberman P.M."/>
            <person name="Berger S.L."/>
        </authorList>
    </citation>
    <scope>FUNCTION IN SAGA TRANSCRIPTIONAL INHIBITION</scope>
</reference>
<reference key="10">
    <citation type="journal article" date="2000" name="Nature">
        <title>Redundant roles for the TFIID and SAGA complexes in global transcription.</title>
        <authorList>
            <person name="Lee T.I."/>
            <person name="Causton H.C."/>
            <person name="Holstege F.C."/>
            <person name="Shen W.C."/>
            <person name="Hannett N."/>
            <person name="Jennings E.G."/>
            <person name="Winston F."/>
            <person name="Green M.R."/>
            <person name="Young R.A."/>
        </authorList>
    </citation>
    <scope>FUNCTION</scope>
</reference>
<reference key="11">
    <citation type="journal article" date="2001" name="Genes Dev.">
        <title>The S. cerevisiae SAGA complex functions in vivo as a coactivator for transcriptional activation by Gal4.</title>
        <authorList>
            <person name="Larschan E."/>
            <person name="Winston F."/>
        </authorList>
    </citation>
    <scope>FUNCTION IN SAGA TRANSCRIPTIONAL ACTIVATION</scope>
</reference>
<reference key="12">
    <citation type="journal article" date="2002" name="Genetics">
        <title>Spt3 plays opposite roles in filamentous growth in Saccharomyces cerevisiae and Candida albicans and is required for C. albicans virulence.</title>
        <authorList>
            <person name="Laprade L."/>
            <person name="Boyartchuk V.L."/>
            <person name="Dietrich W.F."/>
            <person name="Winston F."/>
        </authorList>
    </citation>
    <scope>FUNCTION</scope>
</reference>
<reference key="13">
    <citation type="journal article" date="2002" name="Mol. Cell. Biol.">
        <title>Differential requirement of SAGA components for recruitment of TATA-box-binding protein to promoters in vivo.</title>
        <authorList>
            <person name="Bhaumik S.R."/>
            <person name="Green M.R."/>
        </authorList>
    </citation>
    <scope>FUNCTION IN SAGA TRANSCRIPTIONAL ACTIVATION</scope>
</reference>
<reference key="14">
    <citation type="journal article" date="2002" name="Mol. Cell. Biol.">
        <title>The novel SLIK histone acetyltransferase complex functions in the yeast retrograde response pathway.</title>
        <authorList>
            <person name="Pray-Grant M.G."/>
            <person name="Schieltz D."/>
            <person name="McMahon S.J."/>
            <person name="Wood J.M."/>
            <person name="Kennedy E.L."/>
            <person name="Cook R.G."/>
            <person name="Workman J.L."/>
            <person name="Yates J.R. III"/>
            <person name="Grant P.A."/>
        </authorList>
    </citation>
    <scope>IDENTIFICATION IN THE SLIK COMPLEX</scope>
</reference>
<reference key="15">
    <citation type="journal article" date="2002" name="Proc. Natl. Acad. Sci. U.S.A.">
        <title>SALSA, a variant of yeast SAGA, contains truncated Spt7, which correlates with activated transcription.</title>
        <authorList>
            <person name="Sterner D.E."/>
            <person name="Belotserkovskaya R."/>
            <person name="Berger S.L."/>
        </authorList>
    </citation>
    <scope>IDENTIFICATION IN THE SALSA COMPLEX</scope>
</reference>
<reference key="16">
    <citation type="journal article" date="2003" name="Nature">
        <title>Global analysis of protein expression in yeast.</title>
        <authorList>
            <person name="Ghaemmaghami S."/>
            <person name="Huh W.-K."/>
            <person name="Bower K."/>
            <person name="Howson R.W."/>
            <person name="Belle A."/>
            <person name="Dephoure N."/>
            <person name="O'Shea E.K."/>
            <person name="Weissman J.S."/>
        </authorList>
    </citation>
    <scope>LEVEL OF PROTEIN EXPRESSION [LARGE SCALE ANALYSIS]</scope>
</reference>
<reference key="17">
    <citation type="journal article" date="2005" name="Nature">
        <title>Chd1 chromodomain links histone H3 methylation with SAGA- and SLIK-dependent acetylation.</title>
        <authorList>
            <person name="Pray-Grant M.G."/>
            <person name="Daniel J.A."/>
            <person name="Schieltz D."/>
            <person name="Yates J.R. III"/>
            <person name="Grant P.A."/>
        </authorList>
    </citation>
    <scope>IDENTIFICATION IN THE SLIK COMPLEX</scope>
</reference>
<reference key="18">
    <citation type="journal article" date="2009" name="Science">
        <title>Global analysis of Cdk1 substrate phosphorylation sites provides insights into evolution.</title>
        <authorList>
            <person name="Holt L.J."/>
            <person name="Tuch B.B."/>
            <person name="Villen J."/>
            <person name="Johnson A.D."/>
            <person name="Gygi S.P."/>
            <person name="Morgan D.O."/>
        </authorList>
    </citation>
    <scope>PHOSPHORYLATION [LARGE SCALE ANALYSIS] AT SER-270</scope>
    <scope>IDENTIFICATION BY MASS SPECTROMETRY [LARGE SCALE ANALYSIS]</scope>
</reference>
<reference key="19">
    <citation type="journal article" date="2012" name="Cell Biosci.">
        <title>The nuclear localization of SWI/SNF proteins is subjected to oxygen regulation.</title>
        <authorList>
            <person name="Dastidar R.G."/>
            <person name="Hooda J."/>
            <person name="Shah A."/>
            <person name="Cao T.M."/>
            <person name="Henke R.M."/>
            <person name="Zhang L."/>
        </authorList>
    </citation>
    <scope>SUBCELLULAR LOCATION</scope>
</reference>
<reference key="20">
    <citation type="journal article" date="2014" name="EMBO J.">
        <title>Architecture of the Saccharomyces cerevisiae SAGA transcription coactivator complex.</title>
        <authorList>
            <person name="Han Y."/>
            <person name="Luo J."/>
            <person name="Ranish J."/>
            <person name="Hahn S."/>
        </authorList>
    </citation>
    <scope>SUBUNIT</scope>
</reference>
<reference key="21">
    <citation type="journal article" date="2017" name="Mol. Cell">
        <title>SAGA is a general cofactor for RNA polymerase II transcription.</title>
        <authorList>
            <person name="Baptista T."/>
            <person name="Gruenberg S."/>
            <person name="Minoungou N."/>
            <person name="Koster M.J.E."/>
            <person name="Timmers H.T.M."/>
            <person name="Hahn S."/>
            <person name="Devys D."/>
            <person name="Tora L."/>
        </authorList>
    </citation>
    <scope>FUNCTION</scope>
</reference>
<reference key="22">
    <citation type="journal article" date="2021" name="J. Biol. Chem.">
        <title>SAGA and SAGA-like SLIK transcriptional coactivators are structurally and biochemically equivalent.</title>
        <authorList>
            <person name="Adamus K."/>
            <person name="Reboul C."/>
            <person name="Voss J."/>
            <person name="Huang C."/>
            <person name="Schittenhelm R.B."/>
            <person name="Le S.N."/>
            <person name="Ellisdon A.M."/>
            <person name="Elmlund H."/>
            <person name="Boudes M."/>
            <person name="Elmlund D."/>
        </authorList>
    </citation>
    <scope>FUNCTION</scope>
    <scope>SUBUNIT</scope>
</reference>
<reference key="23">
    <citation type="journal article" date="2004" name="Mol. Cell">
        <title>Molecular architecture of the S. cerevisiae SAGA complex.</title>
        <authorList>
            <person name="Wu P.Y."/>
            <person name="Ruhlmann C."/>
            <person name="Winston F."/>
            <person name="Schultz P."/>
        </authorList>
    </citation>
    <scope>3D-STRUCTURE MODELING OF THE SAGA COMPLEX</scope>
</reference>
<reference evidence="22 23" key="24">
    <citation type="journal article" date="2020" name="Nature">
        <title>Structure of the transcription coactivator SAGA.</title>
        <authorList>
            <person name="Wang H."/>
            <person name="Dienemann C."/>
            <person name="Stutzer A."/>
            <person name="Urlaub H."/>
            <person name="Cheung A.C.M."/>
            <person name="Cramer P."/>
        </authorList>
    </citation>
    <scope>STRUCTURE BY ELECTRON MICROSCOPY (3.30 ANGSTROMS) IN THE SAGA COMPLEX</scope>
</reference>
<accession>P06844</accession>
<accession>D6VT26</accession>
<accession>Q70DE7</accession>
<accession>Q70DE9</accession>
<accession>Q70DF1</accession>
<accession>Q70DF2</accession>
<name>SPT3_YEAST</name>
<organism>
    <name type="scientific">Saccharomyces cerevisiae (strain ATCC 204508 / S288c)</name>
    <name type="common">Baker's yeast</name>
    <dbReference type="NCBI Taxonomy" id="559292"/>
    <lineage>
        <taxon>Eukaryota</taxon>
        <taxon>Fungi</taxon>
        <taxon>Dikarya</taxon>
        <taxon>Ascomycota</taxon>
        <taxon>Saccharomycotina</taxon>
        <taxon>Saccharomycetes</taxon>
        <taxon>Saccharomycetales</taxon>
        <taxon>Saccharomycetaceae</taxon>
        <taxon>Saccharomyces</taxon>
    </lineage>
</organism>
<proteinExistence type="evidence at protein level"/>
<feature type="chain" id="PRO_0000072166" description="SAGA complex subunit SPT3">
    <location>
        <begin position="1"/>
        <end position="337"/>
    </location>
</feature>
<feature type="region of interest" description="Disordered" evidence="1">
    <location>
        <begin position="92"/>
        <end position="131"/>
    </location>
</feature>
<feature type="compositionally biased region" description="Basic and acidic residues" evidence="1">
    <location>
        <begin position="113"/>
        <end position="128"/>
    </location>
</feature>
<feature type="modified residue" description="Phosphoserine" evidence="24">
    <location>
        <position position="270"/>
    </location>
</feature>
<feature type="sequence variant" description="In strain: CLIB 556 and CLIB 630." evidence="12">
    <original>N</original>
    <variation>K</variation>
    <location>
        <position position="76"/>
    </location>
</feature>
<feature type="sequence variant" description="In strain: CLIB 556 and CLIB 630." evidence="12">
    <original>D</original>
    <variation>N</variation>
    <location>
        <position position="93"/>
    </location>
</feature>
<feature type="sequence variant" description="In strain: CLIB 413 haplotype Ha2." evidence="12">
    <original>G</original>
    <variation>S</variation>
    <location>
        <position position="120"/>
    </location>
</feature>
<feature type="sequence variant" description="In strain: R13 haplotype Ha2." evidence="12">
    <original>V</original>
    <variation>I</variation>
    <location>
        <position position="134"/>
    </location>
</feature>
<feature type="sequence variant" description="In strain: YIIc12 haplotype Ha2 and YIIc17." evidence="12">
    <original>R</original>
    <variation>K</variation>
    <location>
        <position position="318"/>
    </location>
</feature>
<feature type="helix" evidence="25">
    <location>
        <begin position="8"/>
        <end position="18"/>
    </location>
</feature>
<feature type="helix" evidence="25">
    <location>
        <begin position="26"/>
        <end position="54"/>
    </location>
</feature>
<feature type="helix" evidence="25">
    <location>
        <begin position="61"/>
        <end position="65"/>
    </location>
</feature>
<feature type="helix" evidence="25">
    <location>
        <begin position="66"/>
        <end position="68"/>
    </location>
</feature>
<feature type="helix" evidence="25">
    <location>
        <begin position="72"/>
        <end position="81"/>
    </location>
</feature>
<feature type="strand" evidence="25">
    <location>
        <begin position="148"/>
        <end position="150"/>
    </location>
</feature>
<feature type="helix" evidence="25">
    <location>
        <begin position="193"/>
        <end position="201"/>
    </location>
</feature>
<feature type="strand" evidence="25">
    <location>
        <begin position="204"/>
        <end position="207"/>
    </location>
</feature>
<feature type="helix" evidence="25">
    <location>
        <begin position="211"/>
        <end position="216"/>
    </location>
</feature>
<feature type="helix" evidence="25">
    <location>
        <begin position="218"/>
        <end position="221"/>
    </location>
</feature>
<feature type="helix" evidence="25">
    <location>
        <begin position="230"/>
        <end position="263"/>
    </location>
</feature>
<feature type="helix" evidence="25">
    <location>
        <begin position="302"/>
        <end position="312"/>
    </location>
</feature>
<feature type="turn" evidence="25">
    <location>
        <begin position="318"/>
        <end position="320"/>
    </location>
</feature>
<feature type="helix" evidence="25">
    <location>
        <begin position="321"/>
        <end position="323"/>
    </location>
</feature>
<feature type="strand" evidence="25">
    <location>
        <begin position="324"/>
        <end position="326"/>
    </location>
</feature>
<sequence>MMDKHKYRVEIQQMMFVSGEINDPPVETTSLIEDIVRGQVIEILLQSNKTAHLRGSRSILPEDVIFLIRHDKAKVNRLRTYLSWKDLRKNAKDQDASAGVASGTGNPGAGGEDDLKKAGGGEKDEKDGGNMMKVKKSQIKLPWELQFMFNEHPLENNDDNDDMDEDEREANIVTLKRLKMADDRTRNMTKEEYVHWSDCRQASFTFRKNKRFKDWSGISQLTEGKPHDDVIDILGFLTFEIVCSLTETALKIKQREQVLQTQKDKSQQSSQDNTNFEFASSTLHRKKRLFDGPENVINPLKPRHIEEAWRVLQTIDMRHRALTNFKGGRLSSKPIIM</sequence>
<evidence type="ECO:0000256" key="1">
    <source>
        <dbReference type="SAM" id="MobiDB-lite"/>
    </source>
</evidence>
<evidence type="ECO:0000269" key="2">
    <source>
    </source>
</evidence>
<evidence type="ECO:0000269" key="3">
    <source>
    </source>
</evidence>
<evidence type="ECO:0000269" key="4">
    <source>
    </source>
</evidence>
<evidence type="ECO:0000269" key="5">
    <source>
    </source>
</evidence>
<evidence type="ECO:0000269" key="6">
    <source>
    </source>
</evidence>
<evidence type="ECO:0000269" key="7">
    <source>
    </source>
</evidence>
<evidence type="ECO:0000269" key="8">
    <source>
    </source>
</evidence>
<evidence type="ECO:0000269" key="9">
    <source>
    </source>
</evidence>
<evidence type="ECO:0000269" key="10">
    <source>
    </source>
</evidence>
<evidence type="ECO:0000269" key="11">
    <source>
    </source>
</evidence>
<evidence type="ECO:0000269" key="12">
    <source>
    </source>
</evidence>
<evidence type="ECO:0000269" key="13">
    <source>
    </source>
</evidence>
<evidence type="ECO:0000269" key="14">
    <source>
    </source>
</evidence>
<evidence type="ECO:0000269" key="15">
    <source>
    </source>
</evidence>
<evidence type="ECO:0000269" key="16">
    <source>
    </source>
</evidence>
<evidence type="ECO:0000269" key="17">
    <source>
    </source>
</evidence>
<evidence type="ECO:0000269" key="18">
    <source>
    </source>
</evidence>
<evidence type="ECO:0000269" key="19">
    <source>
    </source>
</evidence>
<evidence type="ECO:0000269" key="20">
    <source>
    </source>
</evidence>
<evidence type="ECO:0000305" key="21"/>
<evidence type="ECO:0007744" key="22">
    <source>
        <dbReference type="PDB" id="6T9I"/>
    </source>
</evidence>
<evidence type="ECO:0007744" key="23">
    <source>
        <dbReference type="PDB" id="6T9K"/>
    </source>
</evidence>
<evidence type="ECO:0007744" key="24">
    <source>
    </source>
</evidence>
<evidence type="ECO:0007829" key="25">
    <source>
        <dbReference type="PDB" id="6T9K"/>
    </source>
</evidence>
<comment type="function">
    <text evidence="2 3 4 5 6 7 8 9 10 15 16 17 18">Component of the transcription coactivator SAGA complex. SAGA acts as a general cofactor required for essentially all RNA polymerase II transcription (PubMed:10864329, PubMed:25216679, PubMed:28918903). At the promoters, SAGA is required for transcription pre-initiation complex (PIC) recruitment. It influences RNA polymerase II transcriptional activity through different activities such as TBP interaction (via core/TAF module) and promoter selectivity, interaction with transcription activators (via Tra1/SPT module), and chromatin modification through histone acetylation (via HAT module) and deubiquitination (via DUB module) (PubMed:10580001, PubMed:31969703). SAGA preferentially acetylates histones H3 (to form H3K9ac, H3K14ac, H3K18ac and H3K23ac) and H2B and deubiquitinates histone H2B (PubMed:10026213). SAGA interacts with DNA via upstream activating sequences (UASs) (PubMed:11485989). Also identified in a modified version of SAGA named SALSA or SLIK (PubMed:12186975, PubMed:12446794). The cleavage of SPT7 and the absence of the SPT8 subunit in SLIK neither drive any major conformational differences in its structure compared with SAGA, nor significantly affect HAT, DUB, or DNA-binding activities (PubMed:33864814). SPT3 is required for recruitment of TATA-binding protein (TBP) to SAGA-dependent promoters (PubMed:12370284). During SAGA-mediated transcriptional inhibition, SPT3 and SPT8 prevent binding of TBP to the TATA box (PubMed:10611242). Required for diploid filamentous growth and haploid invasive growth (PubMed:12072450).</text>
</comment>
<comment type="subunit">
    <text evidence="8 10 13 15 17 18 19 20">Component of the 1.8 MDa SAGA (Spt-Ada-Gcn5 acetyltransferase) complex, which is composed of 19 subunits TRA1, SPT7, TAF5, NGG1/ADA3, SGF73, SPT20/ADA5, SPT8, TAF12, TAF6, HFI1/ADA1, UBP8, GCN5, ADA2, SPT3, SGF29, TAF10, TAF9, SGF11 and SUS1 (PubMed:31969703, PubMed:9224714, PubMed:9674426). The SAGA complex is composed of 4 modules, namely the HAT (histone acetyltransferase) module (GCN5, ADA2, NGG1/ADA3 and SGF29), the DUB (deubiquitinating) module (UBP8, SGF11, SGF73 and SUS1), the core or TAF (TBP-associated factor) module (TAF5, TAF6, TAF9, TAF10 and TAF12), and the Tra1 or SPT (Suppressor of Ty) module (TRA1, HFI1/ADA1, SPT3, SPT7, SPT8 and SPT20/ADA5). The Tra1/SPT module binds activators, the core module recruits TBP (TATA-binding protein), the HAT module contains the histone H3 acetyltransferase GCN5, and the DUB module comprises the histone H2B deubiquitinase UBP8 (PubMed:25216679, PubMed:31969703). Also identified in an altered form of SAGA, named SALSA (SAGA altered, Spt8 absent) or SLIK (SAGA-like) complex, which contains a C-terminal truncated form of SPT7 and is missing SPT8 (PubMed:12186975, PubMed:12446794, PubMed:15647753). However, it has been shown that the SAGA and SAGA-like SALSA/SLIK transcriptional coactivators are structurally and biochemically equivalent (PubMed:33864814).</text>
</comment>
<comment type="interaction">
    <interactant intactId="EBI-17921">
        <id>P06844</id>
    </interactant>
    <interactant intactId="EBI-8287">
        <id>Q12060</id>
        <label>HFI1</label>
    </interactant>
    <organismsDiffer>false</organismsDiffer>
    <experiments>10</experiments>
</comment>
<comment type="interaction">
    <interactant intactId="EBI-17921">
        <id>P06844</id>
    </interactant>
    <interactant intactId="EBI-17751">
        <id>P50875</id>
        <label>SPT20</label>
    </interactant>
    <organismsDiffer>false</organismsDiffer>
    <experiments>10</experiments>
</comment>
<comment type="subcellular location">
    <subcellularLocation>
        <location evidence="14">Nucleus</location>
    </subcellularLocation>
    <subcellularLocation>
        <location evidence="14">Cytoplasm</location>
    </subcellularLocation>
</comment>
<comment type="miscellaneous">
    <text evidence="11">Present with 1710 molecules/cell in log phase SD medium.</text>
</comment>
<comment type="similarity">
    <text evidence="21">Belongs to the SPT3 family.</text>
</comment>